<evidence type="ECO:0000255" key="1">
    <source>
        <dbReference type="HAMAP-Rule" id="MF_00600"/>
    </source>
</evidence>
<evidence type="ECO:0000269" key="2">
    <source ref="2"/>
</evidence>
<evidence type="ECO:0000305" key="3"/>
<name>CH60_TANFO</name>
<keyword id="KW-0067">ATP-binding</keyword>
<keyword id="KW-0143">Chaperone</keyword>
<keyword id="KW-0963">Cytoplasm</keyword>
<keyword id="KW-0903">Direct protein sequencing</keyword>
<keyword id="KW-0413">Isomerase</keyword>
<keyword id="KW-0547">Nucleotide-binding</keyword>
<proteinExistence type="evidence at protein level"/>
<protein>
    <recommendedName>
        <fullName evidence="1">Chaperonin GroEL</fullName>
        <ecNumber evidence="1">5.6.1.7</ecNumber>
    </recommendedName>
    <alternativeName>
        <fullName evidence="1">60 kDa chaperonin</fullName>
    </alternativeName>
    <alternativeName>
        <fullName evidence="1">Chaperonin-60</fullName>
        <shortName evidence="1">Cpn60</shortName>
    </alternativeName>
</protein>
<dbReference type="EC" id="5.6.1.7" evidence="1"/>
<dbReference type="EMBL" id="AJ006516">
    <property type="protein sequence ID" value="CAB43992.1"/>
    <property type="molecule type" value="Genomic_DNA"/>
</dbReference>
<dbReference type="SMR" id="P81284"/>
<dbReference type="GO" id="GO:0005737">
    <property type="term" value="C:cytoplasm"/>
    <property type="evidence" value="ECO:0007669"/>
    <property type="project" value="UniProtKB-SubCell"/>
</dbReference>
<dbReference type="GO" id="GO:0005524">
    <property type="term" value="F:ATP binding"/>
    <property type="evidence" value="ECO:0007669"/>
    <property type="project" value="UniProtKB-UniRule"/>
</dbReference>
<dbReference type="GO" id="GO:0140662">
    <property type="term" value="F:ATP-dependent protein folding chaperone"/>
    <property type="evidence" value="ECO:0007669"/>
    <property type="project" value="InterPro"/>
</dbReference>
<dbReference type="GO" id="GO:0016853">
    <property type="term" value="F:isomerase activity"/>
    <property type="evidence" value="ECO:0007669"/>
    <property type="project" value="UniProtKB-KW"/>
</dbReference>
<dbReference type="GO" id="GO:0051082">
    <property type="term" value="F:unfolded protein binding"/>
    <property type="evidence" value="ECO:0007669"/>
    <property type="project" value="UniProtKB-UniRule"/>
</dbReference>
<dbReference type="GO" id="GO:0042026">
    <property type="term" value="P:protein refolding"/>
    <property type="evidence" value="ECO:0007669"/>
    <property type="project" value="UniProtKB-UniRule"/>
</dbReference>
<dbReference type="CDD" id="cd03344">
    <property type="entry name" value="GroEL"/>
    <property type="match status" value="1"/>
</dbReference>
<dbReference type="FunFam" id="1.10.560.10:FF:000001">
    <property type="entry name" value="60 kDa chaperonin"/>
    <property type="match status" value="1"/>
</dbReference>
<dbReference type="FunFam" id="3.50.7.10:FF:000001">
    <property type="entry name" value="60 kDa chaperonin"/>
    <property type="match status" value="1"/>
</dbReference>
<dbReference type="Gene3D" id="3.50.7.10">
    <property type="entry name" value="GroEL"/>
    <property type="match status" value="1"/>
</dbReference>
<dbReference type="Gene3D" id="1.10.560.10">
    <property type="entry name" value="GroEL-like equatorial domain"/>
    <property type="match status" value="1"/>
</dbReference>
<dbReference type="Gene3D" id="3.30.260.10">
    <property type="entry name" value="TCP-1-like chaperonin intermediate domain"/>
    <property type="match status" value="1"/>
</dbReference>
<dbReference type="HAMAP" id="MF_00600">
    <property type="entry name" value="CH60"/>
    <property type="match status" value="1"/>
</dbReference>
<dbReference type="InterPro" id="IPR018370">
    <property type="entry name" value="Chaperonin_Cpn60_CS"/>
</dbReference>
<dbReference type="InterPro" id="IPR001844">
    <property type="entry name" value="Cpn60/GroEL"/>
</dbReference>
<dbReference type="InterPro" id="IPR002423">
    <property type="entry name" value="Cpn60/GroEL/TCP-1"/>
</dbReference>
<dbReference type="InterPro" id="IPR027409">
    <property type="entry name" value="GroEL-like_apical_dom_sf"/>
</dbReference>
<dbReference type="InterPro" id="IPR027413">
    <property type="entry name" value="GROEL-like_equatorial_sf"/>
</dbReference>
<dbReference type="InterPro" id="IPR027410">
    <property type="entry name" value="TCP-1-like_intermed_sf"/>
</dbReference>
<dbReference type="NCBIfam" id="TIGR02348">
    <property type="entry name" value="GroEL"/>
    <property type="match status" value="1"/>
</dbReference>
<dbReference type="NCBIfam" id="NF000592">
    <property type="entry name" value="PRK00013.1"/>
    <property type="match status" value="1"/>
</dbReference>
<dbReference type="NCBIfam" id="NF009487">
    <property type="entry name" value="PRK12849.1"/>
    <property type="match status" value="1"/>
</dbReference>
<dbReference type="NCBIfam" id="NF009488">
    <property type="entry name" value="PRK12850.1"/>
    <property type="match status" value="1"/>
</dbReference>
<dbReference type="NCBIfam" id="NF009489">
    <property type="entry name" value="PRK12851.1"/>
    <property type="match status" value="1"/>
</dbReference>
<dbReference type="PANTHER" id="PTHR45633">
    <property type="entry name" value="60 KDA HEAT SHOCK PROTEIN, MITOCHONDRIAL"/>
    <property type="match status" value="1"/>
</dbReference>
<dbReference type="Pfam" id="PF00118">
    <property type="entry name" value="Cpn60_TCP1"/>
    <property type="match status" value="1"/>
</dbReference>
<dbReference type="PRINTS" id="PR00298">
    <property type="entry name" value="CHAPERONIN60"/>
</dbReference>
<dbReference type="SUPFAM" id="SSF52029">
    <property type="entry name" value="GroEL apical domain-like"/>
    <property type="match status" value="1"/>
</dbReference>
<dbReference type="SUPFAM" id="SSF48592">
    <property type="entry name" value="GroEL equatorial domain-like"/>
    <property type="match status" value="1"/>
</dbReference>
<dbReference type="SUPFAM" id="SSF54849">
    <property type="entry name" value="GroEL-intermediate domain like"/>
    <property type="match status" value="1"/>
</dbReference>
<dbReference type="PROSITE" id="PS00296">
    <property type="entry name" value="CHAPERONINS_CPN60"/>
    <property type="match status" value="1"/>
</dbReference>
<comment type="function">
    <text evidence="1">Together with its co-chaperonin GroES, plays an essential role in assisting protein folding. The GroEL-GroES system forms a nano-cage that allows encapsulation of the non-native substrate proteins and provides a physical environment optimized to promote and accelerate protein folding.</text>
</comment>
<comment type="catalytic activity">
    <reaction evidence="1">
        <text>ATP + H2O + a folded polypeptide = ADP + phosphate + an unfolded polypeptide.</text>
        <dbReference type="EC" id="5.6.1.7"/>
    </reaction>
</comment>
<comment type="subunit">
    <text evidence="1">Forms a cylinder of 14 subunits composed of two heptameric rings stacked back-to-back. Interacts with the co-chaperonin GroES.</text>
</comment>
<comment type="subcellular location">
    <subcellularLocation>
        <location evidence="1">Cytoplasm</location>
    </subcellularLocation>
</comment>
<comment type="similarity">
    <text evidence="1">Belongs to the chaperonin (HSP60) family.</text>
</comment>
<reference key="1">
    <citation type="journal article" date="1998" name="DNA Seq.">
        <title>Identification and nucleotide sequence of the heat shock protein 60 (GroEL) gene of Bacteroides forsythus.</title>
        <authorList>
            <person name="Reid H.I."/>
            <person name="Riggio M.P."/>
        </authorList>
    </citation>
    <scope>NUCLEOTIDE SEQUENCE [GENOMIC DNA]</scope>
    <source>
        <strain>ATCC 43037 / JCM 10827 / FDC 338 / CIP 105219</strain>
    </source>
</reference>
<reference key="2">
    <citation type="submission" date="1998-04" db="UniProtKB">
        <authorList>
            <person name="Sojar H.T."/>
            <person name="Glurich I.E."/>
            <person name="Genco R.J."/>
        </authorList>
    </citation>
    <scope>PROTEIN SEQUENCE OF 2-40</scope>
    <source>
        <strain>ATCC 43037 / JCM 10827 / FDC 338 / CIP 105219</strain>
    </source>
</reference>
<feature type="initiator methionine" description="Removed" evidence="2">
    <location>
        <position position="1"/>
    </location>
</feature>
<feature type="chain" id="PRO_0000063271" description="Chaperonin GroEL">
    <location>
        <begin position="2"/>
        <end position="544"/>
    </location>
</feature>
<feature type="binding site" evidence="1">
    <location>
        <begin position="29"/>
        <end position="32"/>
    </location>
    <ligand>
        <name>ATP</name>
        <dbReference type="ChEBI" id="CHEBI:30616"/>
    </ligand>
</feature>
<feature type="binding site" evidence="1">
    <location>
        <position position="50"/>
    </location>
    <ligand>
        <name>ATP</name>
        <dbReference type="ChEBI" id="CHEBI:30616"/>
    </ligand>
</feature>
<feature type="binding site" evidence="1">
    <location>
        <begin position="86"/>
        <end position="90"/>
    </location>
    <ligand>
        <name>ATP</name>
        <dbReference type="ChEBI" id="CHEBI:30616"/>
    </ligand>
</feature>
<feature type="binding site" evidence="1">
    <location>
        <position position="415"/>
    </location>
    <ligand>
        <name>ATP</name>
        <dbReference type="ChEBI" id="CHEBI:30616"/>
    </ligand>
</feature>
<feature type="binding site" evidence="1">
    <location>
        <position position="495"/>
    </location>
    <ligand>
        <name>ATP</name>
        <dbReference type="ChEBI" id="CHEBI:30616"/>
    </ligand>
</feature>
<feature type="sequence conflict" description="In Ref. 2; AA sequence." evidence="3" ref="2">
    <original>EIKFDMNARDLLKKGVDELAN</original>
    <variation>DVKFGNDARVKMLRGVNVLAD</variation>
    <location>
        <begin position="4"/>
        <end position="24"/>
    </location>
</feature>
<feature type="sequence conflict" description="In Ref. 2; AA sequence." evidence="3" ref="2">
    <original>ILE</original>
    <variation>VLD</variation>
    <location>
        <begin position="38"/>
        <end position="40"/>
    </location>
</feature>
<organism>
    <name type="scientific">Tannerella forsythia</name>
    <name type="common">Bacteroides forsythus</name>
    <dbReference type="NCBI Taxonomy" id="28112"/>
    <lineage>
        <taxon>Bacteria</taxon>
        <taxon>Pseudomonadati</taxon>
        <taxon>Bacteroidota</taxon>
        <taxon>Bacteroidia</taxon>
        <taxon>Bacteroidales</taxon>
        <taxon>Tannerellaceae</taxon>
        <taxon>Tannerella</taxon>
    </lineage>
</organism>
<gene>
    <name evidence="1" type="primary">groEL</name>
    <name evidence="1" type="synonym">groL</name>
    <name type="synonym">mopA</name>
</gene>
<accession>P81284</accession>
<accession>Q9X6Y3</accession>
<sequence length="544" mass="57972">MAKEIKFDMNARDLLKKGVDELANAVKVTLGPKGRNVILEKKFGAPQITKDGVTVAKEIELACPYENMGAQLVKEVASKTNDKAGDGTTTATVLAQAIIGVGLKNVTAGANPMDLKRGIDKAVSKVVESIASQSEAVGTNMDRIEHVAKISANGDEGIGKLIAEAMQKVKKEGVITVEEAKGTETTVEVVEGMQFDRGYISAYFVTDTEKMETQFENPYILIYDKKISVLKDLLPILEQMVQSGRALLIIAEDIDSEALATLVVNRLRGGLKVCAVKAPGFGDRRKAMLEDIAILTGGTVITEEKGMKLEDAKMDMLGSADKVTVNKDNTTIVKGNGDKAAIESRIGQIKAQIETTTSDYDKEKLQERLAKLAGGVAVLYVGAPSEVEMKEKKDRVDDALHATRAAIEEGTVPGGGVAYLRAIPALEGLKGENEDETTGIEIVKRAIEEPLRQIVNNAGKEGAVVVQKVKEGTGAFGYNARTDVYEDLSEAGVVDPAKVTRIALENAASIAGMFLTTECVVADKKEEAPAPPMNPGMGGMGGMM</sequence>